<keyword id="KW-0963">Cytoplasm</keyword>
<keyword id="KW-0240">DNA-directed RNA polymerase</keyword>
<keyword id="KW-0479">Metal-binding</keyword>
<keyword id="KW-0548">Nucleotidyltransferase</keyword>
<keyword id="KW-1185">Reference proteome</keyword>
<keyword id="KW-0804">Transcription</keyword>
<keyword id="KW-0808">Transferase</keyword>
<keyword id="KW-0862">Zinc</keyword>
<feature type="chain" id="PRO_0000121363" description="DNA-directed RNA polymerase subunit Rpo10">
    <location>
        <begin position="1"/>
        <end position="66"/>
    </location>
</feature>
<feature type="binding site" evidence="1">
    <location>
        <position position="7"/>
    </location>
    <ligand>
        <name>Zn(2+)</name>
        <dbReference type="ChEBI" id="CHEBI:29105"/>
    </ligand>
</feature>
<feature type="binding site" evidence="1">
    <location>
        <position position="10"/>
    </location>
    <ligand>
        <name>Zn(2+)</name>
        <dbReference type="ChEBI" id="CHEBI:29105"/>
    </ligand>
</feature>
<feature type="binding site" evidence="1">
    <location>
        <position position="44"/>
    </location>
    <ligand>
        <name>Zn(2+)</name>
        <dbReference type="ChEBI" id="CHEBI:29105"/>
    </ligand>
</feature>
<feature type="binding site" evidence="1">
    <location>
        <position position="45"/>
    </location>
    <ligand>
        <name>Zn(2+)</name>
        <dbReference type="ChEBI" id="CHEBI:29105"/>
    </ligand>
</feature>
<accession>Q96YW4</accession>
<evidence type="ECO:0000255" key="1">
    <source>
        <dbReference type="HAMAP-Rule" id="MF_00250"/>
    </source>
</evidence>
<organism>
    <name type="scientific">Sulfurisphaera tokodaii (strain DSM 16993 / JCM 10545 / NBRC 100140 / 7)</name>
    <name type="common">Sulfolobus tokodaii</name>
    <dbReference type="NCBI Taxonomy" id="273063"/>
    <lineage>
        <taxon>Archaea</taxon>
        <taxon>Thermoproteota</taxon>
        <taxon>Thermoprotei</taxon>
        <taxon>Sulfolobales</taxon>
        <taxon>Sulfolobaceae</taxon>
        <taxon>Sulfurisphaera</taxon>
    </lineage>
</organism>
<sequence length="66" mass="7619">MIIPIRCFTCGSLIGDKWEPFITRVSNGEDPGKVLDDLGVKRYCCRRMLLSHVDIIKEVIHYTRPI</sequence>
<protein>
    <recommendedName>
        <fullName evidence="1">DNA-directed RNA polymerase subunit Rpo10</fullName>
        <ecNumber evidence="1">2.7.7.6</ecNumber>
    </recommendedName>
    <alternativeName>
        <fullName evidence="1">DNA-directed RNA polymerase subunit N</fullName>
    </alternativeName>
</protein>
<comment type="function">
    <text evidence="1">DNA-dependent RNA polymerase (RNAP) catalyzes the transcription of DNA into RNA using the four ribonucleoside triphosphates as substrates.</text>
</comment>
<comment type="catalytic activity">
    <reaction evidence="1">
        <text>RNA(n) + a ribonucleoside 5'-triphosphate = RNA(n+1) + diphosphate</text>
        <dbReference type="Rhea" id="RHEA:21248"/>
        <dbReference type="Rhea" id="RHEA-COMP:14527"/>
        <dbReference type="Rhea" id="RHEA-COMP:17342"/>
        <dbReference type="ChEBI" id="CHEBI:33019"/>
        <dbReference type="ChEBI" id="CHEBI:61557"/>
        <dbReference type="ChEBI" id="CHEBI:140395"/>
        <dbReference type="EC" id="2.7.7.6"/>
    </reaction>
</comment>
<comment type="cofactor">
    <cofactor evidence="1">
        <name>Zn(2+)</name>
        <dbReference type="ChEBI" id="CHEBI:29105"/>
    </cofactor>
    <text evidence="1">Binds 1 zinc ion.</text>
</comment>
<comment type="subunit">
    <text evidence="1">Part of the RNA polymerase complex.</text>
</comment>
<comment type="subcellular location">
    <subcellularLocation>
        <location evidence="1">Cytoplasm</location>
    </subcellularLocation>
</comment>
<comment type="similarity">
    <text evidence="1">Belongs to the archaeal Rpo10/eukaryotic RPB10 RNA polymerase subunit family.</text>
</comment>
<proteinExistence type="inferred from homology"/>
<name>RPO10_SULTO</name>
<reference key="1">
    <citation type="journal article" date="2001" name="DNA Res.">
        <title>Complete genome sequence of an aerobic thermoacidophilic Crenarchaeon, Sulfolobus tokodaii strain7.</title>
        <authorList>
            <person name="Kawarabayasi Y."/>
            <person name="Hino Y."/>
            <person name="Horikawa H."/>
            <person name="Jin-no K."/>
            <person name="Takahashi M."/>
            <person name="Sekine M."/>
            <person name="Baba S."/>
            <person name="Ankai A."/>
            <person name="Kosugi H."/>
            <person name="Hosoyama A."/>
            <person name="Fukui S."/>
            <person name="Nagai Y."/>
            <person name="Nishijima K."/>
            <person name="Otsuka R."/>
            <person name="Nakazawa H."/>
            <person name="Takamiya M."/>
            <person name="Kato Y."/>
            <person name="Yoshizawa T."/>
            <person name="Tanaka T."/>
            <person name="Kudoh Y."/>
            <person name="Yamazaki J."/>
            <person name="Kushida N."/>
            <person name="Oguchi A."/>
            <person name="Aoki K."/>
            <person name="Masuda S."/>
            <person name="Yanagii M."/>
            <person name="Nishimura M."/>
            <person name="Yamagishi A."/>
            <person name="Oshima T."/>
            <person name="Kikuchi H."/>
        </authorList>
    </citation>
    <scope>NUCLEOTIDE SEQUENCE [LARGE SCALE GENOMIC DNA]</scope>
    <source>
        <strain>DSM 16993 / JCM 10545 / NBRC 100140 / 7</strain>
    </source>
</reference>
<dbReference type="EC" id="2.7.7.6" evidence="1"/>
<dbReference type="EMBL" id="BA000023">
    <property type="protein sequence ID" value="BAB67162.1"/>
    <property type="molecule type" value="Genomic_DNA"/>
</dbReference>
<dbReference type="RefSeq" id="WP_010980138.1">
    <property type="nucleotide sequence ID" value="NC_003106.2"/>
</dbReference>
<dbReference type="SMR" id="Q96YW4"/>
<dbReference type="STRING" id="273063.STK_20635"/>
<dbReference type="KEGG" id="sto:STK_20635"/>
<dbReference type="PATRIC" id="fig|273063.9.peg.2351"/>
<dbReference type="eggNOG" id="arCOG04244">
    <property type="taxonomic scope" value="Archaea"/>
</dbReference>
<dbReference type="OrthoDB" id="371754at2157"/>
<dbReference type="Proteomes" id="UP000001015">
    <property type="component" value="Chromosome"/>
</dbReference>
<dbReference type="GO" id="GO:0005737">
    <property type="term" value="C:cytoplasm"/>
    <property type="evidence" value="ECO:0007669"/>
    <property type="project" value="UniProtKB-SubCell"/>
</dbReference>
<dbReference type="GO" id="GO:0000428">
    <property type="term" value="C:DNA-directed RNA polymerase complex"/>
    <property type="evidence" value="ECO:0007669"/>
    <property type="project" value="UniProtKB-KW"/>
</dbReference>
<dbReference type="GO" id="GO:0003677">
    <property type="term" value="F:DNA binding"/>
    <property type="evidence" value="ECO:0007669"/>
    <property type="project" value="InterPro"/>
</dbReference>
<dbReference type="GO" id="GO:0003899">
    <property type="term" value="F:DNA-directed RNA polymerase activity"/>
    <property type="evidence" value="ECO:0007669"/>
    <property type="project" value="UniProtKB-UniRule"/>
</dbReference>
<dbReference type="GO" id="GO:0008270">
    <property type="term" value="F:zinc ion binding"/>
    <property type="evidence" value="ECO:0007669"/>
    <property type="project" value="UniProtKB-UniRule"/>
</dbReference>
<dbReference type="GO" id="GO:0006351">
    <property type="term" value="P:DNA-templated transcription"/>
    <property type="evidence" value="ECO:0007669"/>
    <property type="project" value="UniProtKB-UniRule"/>
</dbReference>
<dbReference type="FunFam" id="1.10.10.60:FF:000024">
    <property type="entry name" value="DNA-directed RNA polymerases I, II, and III subunit"/>
    <property type="match status" value="1"/>
</dbReference>
<dbReference type="Gene3D" id="1.10.10.60">
    <property type="entry name" value="Homeodomain-like"/>
    <property type="match status" value="1"/>
</dbReference>
<dbReference type="HAMAP" id="MF_00250">
    <property type="entry name" value="RNApol_arch_Rpo10"/>
    <property type="match status" value="1"/>
</dbReference>
<dbReference type="InterPro" id="IPR023580">
    <property type="entry name" value="RNA_pol_su_RPB10"/>
</dbReference>
<dbReference type="InterPro" id="IPR020789">
    <property type="entry name" value="RNA_pol_suN_Zn-BS"/>
</dbReference>
<dbReference type="InterPro" id="IPR000268">
    <property type="entry name" value="RPABC5/Rpb10"/>
</dbReference>
<dbReference type="NCBIfam" id="NF003089">
    <property type="entry name" value="PRK04016.1"/>
    <property type="match status" value="1"/>
</dbReference>
<dbReference type="PANTHER" id="PTHR23431:SF3">
    <property type="entry name" value="DNA-DIRECTED RNA POLYMERASES I, II, AND III SUBUNIT RPABC5"/>
    <property type="match status" value="1"/>
</dbReference>
<dbReference type="PANTHER" id="PTHR23431">
    <property type="entry name" value="DNA-DIRECTED RNA POLYMERASES I, II, AND III SUBUNIT RPABC5 FAMILY MEMBER"/>
    <property type="match status" value="1"/>
</dbReference>
<dbReference type="Pfam" id="PF01194">
    <property type="entry name" value="RNA_pol_N"/>
    <property type="match status" value="1"/>
</dbReference>
<dbReference type="PIRSF" id="PIRSF005653">
    <property type="entry name" value="RNA_pol_N/8_sub"/>
    <property type="match status" value="1"/>
</dbReference>
<dbReference type="SUPFAM" id="SSF46924">
    <property type="entry name" value="RNA polymerase subunit RPB10"/>
    <property type="match status" value="1"/>
</dbReference>
<dbReference type="PROSITE" id="PS01112">
    <property type="entry name" value="RNA_POL_N_8KD"/>
    <property type="match status" value="1"/>
</dbReference>
<gene>
    <name evidence="1" type="primary">rpo10</name>
    <name evidence="1" type="synonym">rpoN</name>
    <name type="ordered locus">STK_20635</name>
    <name type="ORF">STS221</name>
</gene>